<feature type="chain" id="PRO_0000237462" description="DNA-directed RNA polymerase subunit omega">
    <location>
        <begin position="1"/>
        <end position="69"/>
    </location>
</feature>
<evidence type="ECO:0000255" key="1">
    <source>
        <dbReference type="HAMAP-Rule" id="MF_00366"/>
    </source>
</evidence>
<reference key="1">
    <citation type="journal article" date="2009" name="BMC Microbiol.">
        <title>The genome sequence of Geobacter metallireducens: features of metabolism, physiology and regulation common and dissimilar to Geobacter sulfurreducens.</title>
        <authorList>
            <person name="Aklujkar M."/>
            <person name="Krushkal J."/>
            <person name="DiBartolo G."/>
            <person name="Lapidus A."/>
            <person name="Land M.L."/>
            <person name="Lovley D.R."/>
        </authorList>
    </citation>
    <scope>NUCLEOTIDE SEQUENCE [LARGE SCALE GENOMIC DNA]</scope>
    <source>
        <strain>ATCC 53774 / DSM 7210 / GS-15</strain>
    </source>
</reference>
<keyword id="KW-0240">DNA-directed RNA polymerase</keyword>
<keyword id="KW-0548">Nucleotidyltransferase</keyword>
<keyword id="KW-1185">Reference proteome</keyword>
<keyword id="KW-0804">Transcription</keyword>
<keyword id="KW-0808">Transferase</keyword>
<comment type="function">
    <text evidence="1">Promotes RNA polymerase assembly. Latches the N- and C-terminal regions of the beta' subunit thereby facilitating its interaction with the beta and alpha subunits.</text>
</comment>
<comment type="catalytic activity">
    <reaction evidence="1">
        <text>RNA(n) + a ribonucleoside 5'-triphosphate = RNA(n+1) + diphosphate</text>
        <dbReference type="Rhea" id="RHEA:21248"/>
        <dbReference type="Rhea" id="RHEA-COMP:14527"/>
        <dbReference type="Rhea" id="RHEA-COMP:17342"/>
        <dbReference type="ChEBI" id="CHEBI:33019"/>
        <dbReference type="ChEBI" id="CHEBI:61557"/>
        <dbReference type="ChEBI" id="CHEBI:140395"/>
        <dbReference type="EC" id="2.7.7.6"/>
    </reaction>
</comment>
<comment type="subunit">
    <text evidence="1">The RNAP catalytic core consists of 2 alpha, 1 beta, 1 beta' and 1 omega subunit. When a sigma factor is associated with the core the holoenzyme is formed, which can initiate transcription.</text>
</comment>
<comment type="similarity">
    <text evidence="1">Belongs to the RNA polymerase subunit omega family.</text>
</comment>
<accession>Q39T73</accession>
<name>RPOZ_GEOMG</name>
<gene>
    <name evidence="1" type="primary">rpoZ</name>
    <name type="ordered locus">Gmet_2326</name>
</gene>
<organism>
    <name type="scientific">Geobacter metallireducens (strain ATCC 53774 / DSM 7210 / GS-15)</name>
    <dbReference type="NCBI Taxonomy" id="269799"/>
    <lineage>
        <taxon>Bacteria</taxon>
        <taxon>Pseudomonadati</taxon>
        <taxon>Thermodesulfobacteriota</taxon>
        <taxon>Desulfuromonadia</taxon>
        <taxon>Geobacterales</taxon>
        <taxon>Geobacteraceae</taxon>
        <taxon>Geobacter</taxon>
    </lineage>
</organism>
<dbReference type="EC" id="2.7.7.6" evidence="1"/>
<dbReference type="EMBL" id="CP000148">
    <property type="protein sequence ID" value="ABB32551.1"/>
    <property type="molecule type" value="Genomic_DNA"/>
</dbReference>
<dbReference type="RefSeq" id="WP_004513294.1">
    <property type="nucleotide sequence ID" value="NC_007517.1"/>
</dbReference>
<dbReference type="SMR" id="Q39T73"/>
<dbReference type="STRING" id="269799.Gmet_2326"/>
<dbReference type="KEGG" id="gme:Gmet_2326"/>
<dbReference type="eggNOG" id="COG1758">
    <property type="taxonomic scope" value="Bacteria"/>
</dbReference>
<dbReference type="HOGENOM" id="CLU_125406_5_1_7"/>
<dbReference type="Proteomes" id="UP000007073">
    <property type="component" value="Chromosome"/>
</dbReference>
<dbReference type="GO" id="GO:0000428">
    <property type="term" value="C:DNA-directed RNA polymerase complex"/>
    <property type="evidence" value="ECO:0007669"/>
    <property type="project" value="UniProtKB-KW"/>
</dbReference>
<dbReference type="GO" id="GO:0003677">
    <property type="term" value="F:DNA binding"/>
    <property type="evidence" value="ECO:0007669"/>
    <property type="project" value="UniProtKB-UniRule"/>
</dbReference>
<dbReference type="GO" id="GO:0003899">
    <property type="term" value="F:DNA-directed RNA polymerase activity"/>
    <property type="evidence" value="ECO:0007669"/>
    <property type="project" value="UniProtKB-UniRule"/>
</dbReference>
<dbReference type="GO" id="GO:0006351">
    <property type="term" value="P:DNA-templated transcription"/>
    <property type="evidence" value="ECO:0007669"/>
    <property type="project" value="UniProtKB-UniRule"/>
</dbReference>
<dbReference type="Gene3D" id="3.90.940.10">
    <property type="match status" value="1"/>
</dbReference>
<dbReference type="HAMAP" id="MF_00366">
    <property type="entry name" value="RNApol_bact_RpoZ"/>
    <property type="match status" value="1"/>
</dbReference>
<dbReference type="InterPro" id="IPR003716">
    <property type="entry name" value="DNA-dir_RNA_pol_omega"/>
</dbReference>
<dbReference type="InterPro" id="IPR006110">
    <property type="entry name" value="Pol_omega/Rpo6/RPB6"/>
</dbReference>
<dbReference type="InterPro" id="IPR036161">
    <property type="entry name" value="RPB6/omega-like_sf"/>
</dbReference>
<dbReference type="NCBIfam" id="TIGR00690">
    <property type="entry name" value="rpoZ"/>
    <property type="match status" value="1"/>
</dbReference>
<dbReference type="PANTHER" id="PTHR34476">
    <property type="entry name" value="DNA-DIRECTED RNA POLYMERASE SUBUNIT OMEGA"/>
    <property type="match status" value="1"/>
</dbReference>
<dbReference type="PANTHER" id="PTHR34476:SF1">
    <property type="entry name" value="DNA-DIRECTED RNA POLYMERASE SUBUNIT OMEGA"/>
    <property type="match status" value="1"/>
</dbReference>
<dbReference type="Pfam" id="PF01192">
    <property type="entry name" value="RNA_pol_Rpb6"/>
    <property type="match status" value="1"/>
</dbReference>
<dbReference type="SMART" id="SM01409">
    <property type="entry name" value="RNA_pol_Rpb6"/>
    <property type="match status" value="1"/>
</dbReference>
<dbReference type="SUPFAM" id="SSF63562">
    <property type="entry name" value="RPB6/omega subunit-like"/>
    <property type="match status" value="1"/>
</dbReference>
<proteinExistence type="inferred from homology"/>
<protein>
    <recommendedName>
        <fullName evidence="1">DNA-directed RNA polymerase subunit omega</fullName>
        <shortName evidence="1">RNAP omega subunit</shortName>
        <ecNumber evidence="1">2.7.7.6</ecNumber>
    </recommendedName>
    <alternativeName>
        <fullName evidence="1">RNA polymerase omega subunit</fullName>
    </alternativeName>
    <alternativeName>
        <fullName evidence="1">Transcriptase subunit omega</fullName>
    </alternativeName>
</protein>
<sequence length="69" mass="7665">MARVTVEDCLEKVDNRFLLVMLASKRVKQLYKGASPLIDNKAANKNVVVSLREIASGKVGYELTSRKAK</sequence>